<accession>B7NAQ6</accession>
<name>SERC_ECOLU</name>
<evidence type="ECO:0000255" key="1">
    <source>
        <dbReference type="HAMAP-Rule" id="MF_00160"/>
    </source>
</evidence>
<feature type="chain" id="PRO_1000203532" description="Phosphoserine aminotransferase">
    <location>
        <begin position="1"/>
        <end position="362"/>
    </location>
</feature>
<feature type="binding site" evidence="1">
    <location>
        <position position="9"/>
    </location>
    <ligand>
        <name>L-glutamate</name>
        <dbReference type="ChEBI" id="CHEBI:29985"/>
    </ligand>
</feature>
<feature type="binding site" evidence="1">
    <location>
        <position position="42"/>
    </location>
    <ligand>
        <name>L-glutamate</name>
        <dbReference type="ChEBI" id="CHEBI:29985"/>
    </ligand>
</feature>
<feature type="binding site" evidence="1">
    <location>
        <begin position="76"/>
        <end position="77"/>
    </location>
    <ligand>
        <name>pyridoxal 5'-phosphate</name>
        <dbReference type="ChEBI" id="CHEBI:597326"/>
    </ligand>
</feature>
<feature type="binding site" evidence="1">
    <location>
        <position position="102"/>
    </location>
    <ligand>
        <name>pyridoxal 5'-phosphate</name>
        <dbReference type="ChEBI" id="CHEBI:597326"/>
    </ligand>
</feature>
<feature type="binding site" evidence="1">
    <location>
        <position position="153"/>
    </location>
    <ligand>
        <name>pyridoxal 5'-phosphate</name>
        <dbReference type="ChEBI" id="CHEBI:597326"/>
    </ligand>
</feature>
<feature type="binding site" evidence="1">
    <location>
        <position position="174"/>
    </location>
    <ligand>
        <name>pyridoxal 5'-phosphate</name>
        <dbReference type="ChEBI" id="CHEBI:597326"/>
    </ligand>
</feature>
<feature type="binding site" evidence="1">
    <location>
        <position position="197"/>
    </location>
    <ligand>
        <name>pyridoxal 5'-phosphate</name>
        <dbReference type="ChEBI" id="CHEBI:597326"/>
    </ligand>
</feature>
<feature type="binding site" evidence="1">
    <location>
        <begin position="239"/>
        <end position="240"/>
    </location>
    <ligand>
        <name>pyridoxal 5'-phosphate</name>
        <dbReference type="ChEBI" id="CHEBI:597326"/>
    </ligand>
</feature>
<feature type="modified residue" description="N6-(pyridoxal phosphate)lysine" evidence="1">
    <location>
        <position position="198"/>
    </location>
</feature>
<proteinExistence type="inferred from homology"/>
<reference key="1">
    <citation type="journal article" date="2009" name="PLoS Genet.">
        <title>Organised genome dynamics in the Escherichia coli species results in highly diverse adaptive paths.</title>
        <authorList>
            <person name="Touchon M."/>
            <person name="Hoede C."/>
            <person name="Tenaillon O."/>
            <person name="Barbe V."/>
            <person name="Baeriswyl S."/>
            <person name="Bidet P."/>
            <person name="Bingen E."/>
            <person name="Bonacorsi S."/>
            <person name="Bouchier C."/>
            <person name="Bouvet O."/>
            <person name="Calteau A."/>
            <person name="Chiapello H."/>
            <person name="Clermont O."/>
            <person name="Cruveiller S."/>
            <person name="Danchin A."/>
            <person name="Diard M."/>
            <person name="Dossat C."/>
            <person name="Karoui M.E."/>
            <person name="Frapy E."/>
            <person name="Garry L."/>
            <person name="Ghigo J.M."/>
            <person name="Gilles A.M."/>
            <person name="Johnson J."/>
            <person name="Le Bouguenec C."/>
            <person name="Lescat M."/>
            <person name="Mangenot S."/>
            <person name="Martinez-Jehanne V."/>
            <person name="Matic I."/>
            <person name="Nassif X."/>
            <person name="Oztas S."/>
            <person name="Petit M.A."/>
            <person name="Pichon C."/>
            <person name="Rouy Z."/>
            <person name="Ruf C.S."/>
            <person name="Schneider D."/>
            <person name="Tourret J."/>
            <person name="Vacherie B."/>
            <person name="Vallenet D."/>
            <person name="Medigue C."/>
            <person name="Rocha E.P.C."/>
            <person name="Denamur E."/>
        </authorList>
    </citation>
    <scope>NUCLEOTIDE SEQUENCE [LARGE SCALE GENOMIC DNA]</scope>
    <source>
        <strain>UMN026 / ExPEC</strain>
    </source>
</reference>
<comment type="function">
    <text evidence="1">Catalyzes the reversible conversion of 3-phosphohydroxypyruvate to phosphoserine and of 3-hydroxy-2-oxo-4-phosphonooxybutanoate to phosphohydroxythreonine.</text>
</comment>
<comment type="catalytic activity">
    <reaction evidence="1">
        <text>O-phospho-L-serine + 2-oxoglutarate = 3-phosphooxypyruvate + L-glutamate</text>
        <dbReference type="Rhea" id="RHEA:14329"/>
        <dbReference type="ChEBI" id="CHEBI:16810"/>
        <dbReference type="ChEBI" id="CHEBI:18110"/>
        <dbReference type="ChEBI" id="CHEBI:29985"/>
        <dbReference type="ChEBI" id="CHEBI:57524"/>
        <dbReference type="EC" id="2.6.1.52"/>
    </reaction>
</comment>
<comment type="catalytic activity">
    <reaction evidence="1">
        <text>4-(phosphooxy)-L-threonine + 2-oxoglutarate = (R)-3-hydroxy-2-oxo-4-phosphooxybutanoate + L-glutamate</text>
        <dbReference type="Rhea" id="RHEA:16573"/>
        <dbReference type="ChEBI" id="CHEBI:16810"/>
        <dbReference type="ChEBI" id="CHEBI:29985"/>
        <dbReference type="ChEBI" id="CHEBI:58452"/>
        <dbReference type="ChEBI" id="CHEBI:58538"/>
        <dbReference type="EC" id="2.6.1.52"/>
    </reaction>
</comment>
<comment type="cofactor">
    <cofactor evidence="1">
        <name>pyridoxal 5'-phosphate</name>
        <dbReference type="ChEBI" id="CHEBI:597326"/>
    </cofactor>
    <text evidence="1">Binds 1 pyridoxal phosphate per subunit.</text>
</comment>
<comment type="pathway">
    <text evidence="1">Amino-acid biosynthesis; L-serine biosynthesis; L-serine from 3-phospho-D-glycerate: step 2/3.</text>
</comment>
<comment type="pathway">
    <text evidence="1">Cofactor biosynthesis; pyridoxine 5'-phosphate biosynthesis; pyridoxine 5'-phosphate from D-erythrose 4-phosphate: step 3/5.</text>
</comment>
<comment type="subunit">
    <text evidence="1">Homodimer.</text>
</comment>
<comment type="subcellular location">
    <subcellularLocation>
        <location evidence="1">Cytoplasm</location>
    </subcellularLocation>
</comment>
<comment type="similarity">
    <text evidence="1">Belongs to the class-V pyridoxal-phosphate-dependent aminotransferase family. SerC subfamily.</text>
</comment>
<keyword id="KW-0028">Amino-acid biosynthesis</keyword>
<keyword id="KW-0032">Aminotransferase</keyword>
<keyword id="KW-0963">Cytoplasm</keyword>
<keyword id="KW-0663">Pyridoxal phosphate</keyword>
<keyword id="KW-0664">Pyridoxine biosynthesis</keyword>
<keyword id="KW-0718">Serine biosynthesis</keyword>
<keyword id="KW-0808">Transferase</keyword>
<organism>
    <name type="scientific">Escherichia coli O17:K52:H18 (strain UMN026 / ExPEC)</name>
    <dbReference type="NCBI Taxonomy" id="585056"/>
    <lineage>
        <taxon>Bacteria</taxon>
        <taxon>Pseudomonadati</taxon>
        <taxon>Pseudomonadota</taxon>
        <taxon>Gammaproteobacteria</taxon>
        <taxon>Enterobacterales</taxon>
        <taxon>Enterobacteriaceae</taxon>
        <taxon>Escherichia</taxon>
    </lineage>
</organism>
<gene>
    <name evidence="1" type="primary">serC</name>
    <name type="ordered locus">ECUMN_1100</name>
</gene>
<protein>
    <recommendedName>
        <fullName evidence="1">Phosphoserine aminotransferase</fullName>
        <ecNumber evidence="1">2.6.1.52</ecNumber>
    </recommendedName>
    <alternativeName>
        <fullName evidence="1">Phosphohydroxythreonine aminotransferase</fullName>
        <shortName evidence="1">PSAT</shortName>
    </alternativeName>
</protein>
<dbReference type="EC" id="2.6.1.52" evidence="1"/>
<dbReference type="EMBL" id="CU928163">
    <property type="protein sequence ID" value="CAR12309.1"/>
    <property type="molecule type" value="Genomic_DNA"/>
</dbReference>
<dbReference type="RefSeq" id="WP_000057148.1">
    <property type="nucleotide sequence ID" value="NC_011751.1"/>
</dbReference>
<dbReference type="RefSeq" id="YP_002411853.1">
    <property type="nucleotide sequence ID" value="NC_011751.1"/>
</dbReference>
<dbReference type="SMR" id="B7NAQ6"/>
<dbReference type="STRING" id="585056.ECUMN_1100"/>
<dbReference type="KEGG" id="eum:ECUMN_1100"/>
<dbReference type="PATRIC" id="fig|585056.7.peg.1295"/>
<dbReference type="HOGENOM" id="CLU_034866_0_2_6"/>
<dbReference type="UniPathway" id="UPA00135">
    <property type="reaction ID" value="UER00197"/>
</dbReference>
<dbReference type="UniPathway" id="UPA00244">
    <property type="reaction ID" value="UER00311"/>
</dbReference>
<dbReference type="Proteomes" id="UP000007097">
    <property type="component" value="Chromosome"/>
</dbReference>
<dbReference type="GO" id="GO:0005737">
    <property type="term" value="C:cytoplasm"/>
    <property type="evidence" value="ECO:0007669"/>
    <property type="project" value="UniProtKB-SubCell"/>
</dbReference>
<dbReference type="GO" id="GO:0004648">
    <property type="term" value="F:O-phospho-L-serine:2-oxoglutarate aminotransferase activity"/>
    <property type="evidence" value="ECO:0007669"/>
    <property type="project" value="UniProtKB-UniRule"/>
</dbReference>
<dbReference type="GO" id="GO:0030170">
    <property type="term" value="F:pyridoxal phosphate binding"/>
    <property type="evidence" value="ECO:0007669"/>
    <property type="project" value="UniProtKB-UniRule"/>
</dbReference>
<dbReference type="GO" id="GO:0006564">
    <property type="term" value="P:L-serine biosynthetic process"/>
    <property type="evidence" value="ECO:0007669"/>
    <property type="project" value="UniProtKB-UniRule"/>
</dbReference>
<dbReference type="GO" id="GO:0008615">
    <property type="term" value="P:pyridoxine biosynthetic process"/>
    <property type="evidence" value="ECO:0007669"/>
    <property type="project" value="UniProtKB-UniRule"/>
</dbReference>
<dbReference type="CDD" id="cd00611">
    <property type="entry name" value="PSAT_like"/>
    <property type="match status" value="1"/>
</dbReference>
<dbReference type="FunFam" id="3.40.640.10:FF:000010">
    <property type="entry name" value="Phosphoserine aminotransferase"/>
    <property type="match status" value="1"/>
</dbReference>
<dbReference type="FunFam" id="3.90.1150.10:FF:000006">
    <property type="entry name" value="Phosphoserine aminotransferase"/>
    <property type="match status" value="1"/>
</dbReference>
<dbReference type="Gene3D" id="3.90.1150.10">
    <property type="entry name" value="Aspartate Aminotransferase, domain 1"/>
    <property type="match status" value="1"/>
</dbReference>
<dbReference type="Gene3D" id="3.40.640.10">
    <property type="entry name" value="Type I PLP-dependent aspartate aminotransferase-like (Major domain)"/>
    <property type="match status" value="1"/>
</dbReference>
<dbReference type="HAMAP" id="MF_00160">
    <property type="entry name" value="SerC_aminotrans_5"/>
    <property type="match status" value="1"/>
</dbReference>
<dbReference type="InterPro" id="IPR000192">
    <property type="entry name" value="Aminotrans_V_dom"/>
</dbReference>
<dbReference type="InterPro" id="IPR020578">
    <property type="entry name" value="Aminotrans_V_PyrdxlP_BS"/>
</dbReference>
<dbReference type="InterPro" id="IPR022278">
    <property type="entry name" value="Pser_aminoTfrase"/>
</dbReference>
<dbReference type="InterPro" id="IPR015424">
    <property type="entry name" value="PyrdxlP-dep_Trfase"/>
</dbReference>
<dbReference type="InterPro" id="IPR015421">
    <property type="entry name" value="PyrdxlP-dep_Trfase_major"/>
</dbReference>
<dbReference type="InterPro" id="IPR015422">
    <property type="entry name" value="PyrdxlP-dep_Trfase_small"/>
</dbReference>
<dbReference type="NCBIfam" id="NF003764">
    <property type="entry name" value="PRK05355.1"/>
    <property type="match status" value="1"/>
</dbReference>
<dbReference type="NCBIfam" id="TIGR01364">
    <property type="entry name" value="serC_1"/>
    <property type="match status" value="1"/>
</dbReference>
<dbReference type="PANTHER" id="PTHR43247">
    <property type="entry name" value="PHOSPHOSERINE AMINOTRANSFERASE"/>
    <property type="match status" value="1"/>
</dbReference>
<dbReference type="PANTHER" id="PTHR43247:SF1">
    <property type="entry name" value="PHOSPHOSERINE AMINOTRANSFERASE"/>
    <property type="match status" value="1"/>
</dbReference>
<dbReference type="Pfam" id="PF00266">
    <property type="entry name" value="Aminotran_5"/>
    <property type="match status" value="1"/>
</dbReference>
<dbReference type="PIRSF" id="PIRSF000525">
    <property type="entry name" value="SerC"/>
    <property type="match status" value="1"/>
</dbReference>
<dbReference type="SUPFAM" id="SSF53383">
    <property type="entry name" value="PLP-dependent transferases"/>
    <property type="match status" value="1"/>
</dbReference>
<dbReference type="PROSITE" id="PS00595">
    <property type="entry name" value="AA_TRANSFER_CLASS_5"/>
    <property type="match status" value="1"/>
</dbReference>
<sequence>MAQIFNFSSGPAMLPAEVLKQAQQELRDWNGLGTSVMEVSHRGKEFIQVAEEAEKDFRDLLNVPSNYKVLFCHGGGRGQFAAVPLNILGDKTTADYVDAGYWAASAIKEAKKYCTPNVFDAKVTVDGLRAVKPMREWQLSDNAAYMHYCPNETIDGIAIDETPDFGKDVVVAADFSSTILSRPIDVSRYGVIYAGAQKNIGPAGLTIVIVREDLLGKANIACPSILDYSILNDNGSMFNTPPTFAWYLSGLVFKWLKANGGVAEMDKINQQKAELLYGVIDNSDFYRNDVAKANRSRMNVPFQLADSALDKLFLEESFAAGLHALKGHRVVGGMRASIYNAMPLEGVKALTDFMIEFERRHG</sequence>